<accession>Q5P2V5</accession>
<proteinExistence type="inferred from homology"/>
<dbReference type="EC" id="2.5.1.6" evidence="1"/>
<dbReference type="EMBL" id="CR555306">
    <property type="protein sequence ID" value="CAI08359.1"/>
    <property type="molecule type" value="Genomic_DNA"/>
</dbReference>
<dbReference type="RefSeq" id="WP_011238047.1">
    <property type="nucleotide sequence ID" value="NC_006513.1"/>
</dbReference>
<dbReference type="SMR" id="Q5P2V5"/>
<dbReference type="STRING" id="76114.ebA3942"/>
<dbReference type="KEGG" id="eba:ebA3942"/>
<dbReference type="eggNOG" id="COG0192">
    <property type="taxonomic scope" value="Bacteria"/>
</dbReference>
<dbReference type="HOGENOM" id="CLU_041802_1_1_4"/>
<dbReference type="OrthoDB" id="9801686at2"/>
<dbReference type="UniPathway" id="UPA00315">
    <property type="reaction ID" value="UER00080"/>
</dbReference>
<dbReference type="Proteomes" id="UP000006552">
    <property type="component" value="Chromosome"/>
</dbReference>
<dbReference type="GO" id="GO:0005737">
    <property type="term" value="C:cytoplasm"/>
    <property type="evidence" value="ECO:0007669"/>
    <property type="project" value="UniProtKB-SubCell"/>
</dbReference>
<dbReference type="GO" id="GO:0005524">
    <property type="term" value="F:ATP binding"/>
    <property type="evidence" value="ECO:0007669"/>
    <property type="project" value="UniProtKB-UniRule"/>
</dbReference>
<dbReference type="GO" id="GO:0000287">
    <property type="term" value="F:magnesium ion binding"/>
    <property type="evidence" value="ECO:0007669"/>
    <property type="project" value="UniProtKB-UniRule"/>
</dbReference>
<dbReference type="GO" id="GO:0004478">
    <property type="term" value="F:methionine adenosyltransferase activity"/>
    <property type="evidence" value="ECO:0007669"/>
    <property type="project" value="UniProtKB-UniRule"/>
</dbReference>
<dbReference type="GO" id="GO:0006730">
    <property type="term" value="P:one-carbon metabolic process"/>
    <property type="evidence" value="ECO:0007669"/>
    <property type="project" value="UniProtKB-KW"/>
</dbReference>
<dbReference type="GO" id="GO:0006556">
    <property type="term" value="P:S-adenosylmethionine biosynthetic process"/>
    <property type="evidence" value="ECO:0007669"/>
    <property type="project" value="UniProtKB-UniRule"/>
</dbReference>
<dbReference type="CDD" id="cd18079">
    <property type="entry name" value="S-AdoMet_synt"/>
    <property type="match status" value="1"/>
</dbReference>
<dbReference type="FunFam" id="3.30.300.10:FF:000003">
    <property type="entry name" value="S-adenosylmethionine synthase"/>
    <property type="match status" value="1"/>
</dbReference>
<dbReference type="FunFam" id="3.30.300.10:FF:000004">
    <property type="entry name" value="S-adenosylmethionine synthase"/>
    <property type="match status" value="1"/>
</dbReference>
<dbReference type="Gene3D" id="3.30.300.10">
    <property type="match status" value="3"/>
</dbReference>
<dbReference type="HAMAP" id="MF_00086">
    <property type="entry name" value="S_AdoMet_synth1"/>
    <property type="match status" value="1"/>
</dbReference>
<dbReference type="InterPro" id="IPR022631">
    <property type="entry name" value="ADOMET_SYNTHASE_CS"/>
</dbReference>
<dbReference type="InterPro" id="IPR022630">
    <property type="entry name" value="S-AdoMet_synt_C"/>
</dbReference>
<dbReference type="InterPro" id="IPR022629">
    <property type="entry name" value="S-AdoMet_synt_central"/>
</dbReference>
<dbReference type="InterPro" id="IPR022628">
    <property type="entry name" value="S-AdoMet_synt_N"/>
</dbReference>
<dbReference type="InterPro" id="IPR002133">
    <property type="entry name" value="S-AdoMet_synthetase"/>
</dbReference>
<dbReference type="InterPro" id="IPR022636">
    <property type="entry name" value="S-AdoMet_synthetase_sfam"/>
</dbReference>
<dbReference type="NCBIfam" id="TIGR01034">
    <property type="entry name" value="metK"/>
    <property type="match status" value="1"/>
</dbReference>
<dbReference type="PANTHER" id="PTHR11964">
    <property type="entry name" value="S-ADENOSYLMETHIONINE SYNTHETASE"/>
    <property type="match status" value="1"/>
</dbReference>
<dbReference type="Pfam" id="PF02773">
    <property type="entry name" value="S-AdoMet_synt_C"/>
    <property type="match status" value="1"/>
</dbReference>
<dbReference type="Pfam" id="PF02772">
    <property type="entry name" value="S-AdoMet_synt_M"/>
    <property type="match status" value="1"/>
</dbReference>
<dbReference type="Pfam" id="PF00438">
    <property type="entry name" value="S-AdoMet_synt_N"/>
    <property type="match status" value="1"/>
</dbReference>
<dbReference type="PIRSF" id="PIRSF000497">
    <property type="entry name" value="MAT"/>
    <property type="match status" value="1"/>
</dbReference>
<dbReference type="SUPFAM" id="SSF55973">
    <property type="entry name" value="S-adenosylmethionine synthetase"/>
    <property type="match status" value="3"/>
</dbReference>
<dbReference type="PROSITE" id="PS00376">
    <property type="entry name" value="ADOMET_SYNTHASE_1"/>
    <property type="match status" value="1"/>
</dbReference>
<dbReference type="PROSITE" id="PS00377">
    <property type="entry name" value="ADOMET_SYNTHASE_2"/>
    <property type="match status" value="1"/>
</dbReference>
<sequence>MSKEYLFTSESVSEGHPDKVADQVSDGVLDAILATDPQARVACETLVSTGLVVISGEITTTAHPNYREIAQEVIRRIGYDNSDIGFDYKSCAVLAAINRQSADIAQGVNEGEGLDLDQGAGDQGLMFGYACNETPSLIPLPIYYAHRIMQRQSELRKDGRLNWLRPDAKSQLTVRYVDGKPVAIDTVVVSTQHSPEVSHAQITELVIEEIIKPVLPSALMQGEVRYLINPTGRFVIGGPHGDCGLTGRKIIVDTYGGAAHHGGGAFSGKDPSKVDRSAAYAGRWVAKNIVAAGLADRCEVQVAYAIGVARPVSMMIETFGTGRITDEKIVELVQRHFDLRPKAIIQELNLLRPIYGKTAAYGHFGRDEPEFTWEATDKAAALRADAGL</sequence>
<comment type="function">
    <text evidence="1">Catalyzes the formation of S-adenosylmethionine (AdoMet) from methionine and ATP. The overall synthetic reaction is composed of two sequential steps, AdoMet formation and the subsequent tripolyphosphate hydrolysis which occurs prior to release of AdoMet from the enzyme.</text>
</comment>
<comment type="catalytic activity">
    <reaction evidence="1">
        <text>L-methionine + ATP + H2O = S-adenosyl-L-methionine + phosphate + diphosphate</text>
        <dbReference type="Rhea" id="RHEA:21080"/>
        <dbReference type="ChEBI" id="CHEBI:15377"/>
        <dbReference type="ChEBI" id="CHEBI:30616"/>
        <dbReference type="ChEBI" id="CHEBI:33019"/>
        <dbReference type="ChEBI" id="CHEBI:43474"/>
        <dbReference type="ChEBI" id="CHEBI:57844"/>
        <dbReference type="ChEBI" id="CHEBI:59789"/>
        <dbReference type="EC" id="2.5.1.6"/>
    </reaction>
</comment>
<comment type="cofactor">
    <cofactor evidence="1">
        <name>Mg(2+)</name>
        <dbReference type="ChEBI" id="CHEBI:18420"/>
    </cofactor>
    <text evidence="1">Binds 2 divalent ions per subunit.</text>
</comment>
<comment type="cofactor">
    <cofactor evidence="1">
        <name>K(+)</name>
        <dbReference type="ChEBI" id="CHEBI:29103"/>
    </cofactor>
    <text evidence="1">Binds 1 potassium ion per subunit.</text>
</comment>
<comment type="pathway">
    <text evidence="1">Amino-acid biosynthesis; S-adenosyl-L-methionine biosynthesis; S-adenosyl-L-methionine from L-methionine: step 1/1.</text>
</comment>
<comment type="subunit">
    <text evidence="1">Homotetramer; dimer of dimers.</text>
</comment>
<comment type="subcellular location">
    <subcellularLocation>
        <location evidence="1">Cytoplasm</location>
    </subcellularLocation>
</comment>
<comment type="similarity">
    <text evidence="1">Belongs to the AdoMet synthase family.</text>
</comment>
<name>METK_AROAE</name>
<keyword id="KW-0067">ATP-binding</keyword>
<keyword id="KW-0963">Cytoplasm</keyword>
<keyword id="KW-0460">Magnesium</keyword>
<keyword id="KW-0479">Metal-binding</keyword>
<keyword id="KW-0547">Nucleotide-binding</keyword>
<keyword id="KW-0554">One-carbon metabolism</keyword>
<keyword id="KW-0630">Potassium</keyword>
<keyword id="KW-1185">Reference proteome</keyword>
<keyword id="KW-0808">Transferase</keyword>
<feature type="chain" id="PRO_0000174482" description="S-adenosylmethionine synthase">
    <location>
        <begin position="1"/>
        <end position="388"/>
    </location>
</feature>
<feature type="region of interest" description="Flexible loop" evidence="1">
    <location>
        <begin position="100"/>
        <end position="110"/>
    </location>
</feature>
<feature type="binding site" description="in other chain" evidence="1">
    <location>
        <position position="16"/>
    </location>
    <ligand>
        <name>ATP</name>
        <dbReference type="ChEBI" id="CHEBI:30616"/>
        <note>ligand shared between two neighboring subunits</note>
    </ligand>
</feature>
<feature type="binding site" evidence="1">
    <location>
        <position position="18"/>
    </location>
    <ligand>
        <name>Mg(2+)</name>
        <dbReference type="ChEBI" id="CHEBI:18420"/>
    </ligand>
</feature>
<feature type="binding site" evidence="1">
    <location>
        <position position="44"/>
    </location>
    <ligand>
        <name>K(+)</name>
        <dbReference type="ChEBI" id="CHEBI:29103"/>
    </ligand>
</feature>
<feature type="binding site" description="in other chain" evidence="1">
    <location>
        <position position="57"/>
    </location>
    <ligand>
        <name>L-methionine</name>
        <dbReference type="ChEBI" id="CHEBI:57844"/>
        <note>ligand shared between two neighboring subunits</note>
    </ligand>
</feature>
<feature type="binding site" description="in other chain" evidence="1">
    <location>
        <position position="100"/>
    </location>
    <ligand>
        <name>L-methionine</name>
        <dbReference type="ChEBI" id="CHEBI:57844"/>
        <note>ligand shared between two neighboring subunits</note>
    </ligand>
</feature>
<feature type="binding site" description="in other chain" evidence="1">
    <location>
        <begin position="167"/>
        <end position="169"/>
    </location>
    <ligand>
        <name>ATP</name>
        <dbReference type="ChEBI" id="CHEBI:30616"/>
        <note>ligand shared between two neighboring subunits</note>
    </ligand>
</feature>
<feature type="binding site" description="in other chain" evidence="1">
    <location>
        <begin position="233"/>
        <end position="234"/>
    </location>
    <ligand>
        <name>ATP</name>
        <dbReference type="ChEBI" id="CHEBI:30616"/>
        <note>ligand shared between two neighboring subunits</note>
    </ligand>
</feature>
<feature type="binding site" evidence="1">
    <location>
        <position position="242"/>
    </location>
    <ligand>
        <name>ATP</name>
        <dbReference type="ChEBI" id="CHEBI:30616"/>
        <note>ligand shared between two neighboring subunits</note>
    </ligand>
</feature>
<feature type="binding site" evidence="1">
    <location>
        <position position="242"/>
    </location>
    <ligand>
        <name>L-methionine</name>
        <dbReference type="ChEBI" id="CHEBI:57844"/>
        <note>ligand shared between two neighboring subunits</note>
    </ligand>
</feature>
<feature type="binding site" description="in other chain" evidence="1">
    <location>
        <begin position="248"/>
        <end position="249"/>
    </location>
    <ligand>
        <name>ATP</name>
        <dbReference type="ChEBI" id="CHEBI:30616"/>
        <note>ligand shared between two neighboring subunits</note>
    </ligand>
</feature>
<feature type="binding site" evidence="1">
    <location>
        <position position="265"/>
    </location>
    <ligand>
        <name>ATP</name>
        <dbReference type="ChEBI" id="CHEBI:30616"/>
        <note>ligand shared between two neighboring subunits</note>
    </ligand>
</feature>
<feature type="binding site" evidence="1">
    <location>
        <position position="269"/>
    </location>
    <ligand>
        <name>ATP</name>
        <dbReference type="ChEBI" id="CHEBI:30616"/>
        <note>ligand shared between two neighboring subunits</note>
    </ligand>
</feature>
<feature type="binding site" description="in other chain" evidence="1">
    <location>
        <position position="273"/>
    </location>
    <ligand>
        <name>L-methionine</name>
        <dbReference type="ChEBI" id="CHEBI:57844"/>
        <note>ligand shared between two neighboring subunits</note>
    </ligand>
</feature>
<reference key="1">
    <citation type="journal article" date="2005" name="Arch. Microbiol.">
        <title>The genome sequence of an anaerobic aromatic-degrading denitrifying bacterium, strain EbN1.</title>
        <authorList>
            <person name="Rabus R."/>
            <person name="Kube M."/>
            <person name="Heider J."/>
            <person name="Beck A."/>
            <person name="Heitmann K."/>
            <person name="Widdel F."/>
            <person name="Reinhardt R."/>
        </authorList>
    </citation>
    <scope>NUCLEOTIDE SEQUENCE [LARGE SCALE GENOMIC DNA]</scope>
    <source>
        <strain>DSM 19018 / LMG 30748 / EbN1</strain>
    </source>
</reference>
<evidence type="ECO:0000255" key="1">
    <source>
        <dbReference type="HAMAP-Rule" id="MF_00086"/>
    </source>
</evidence>
<gene>
    <name evidence="1" type="primary">metK</name>
    <name type="ordered locus">AZOSEA22340</name>
    <name type="ORF">ebA3942</name>
</gene>
<protein>
    <recommendedName>
        <fullName evidence="1">S-adenosylmethionine synthase</fullName>
        <shortName evidence="1">AdoMet synthase</shortName>
        <ecNumber evidence="1">2.5.1.6</ecNumber>
    </recommendedName>
    <alternativeName>
        <fullName evidence="1">MAT</fullName>
    </alternativeName>
    <alternativeName>
        <fullName evidence="1">Methionine adenosyltransferase</fullName>
    </alternativeName>
</protein>
<organism>
    <name type="scientific">Aromatoleum aromaticum (strain DSM 19018 / LMG 30748 / EbN1)</name>
    <name type="common">Azoarcus sp. (strain EbN1)</name>
    <dbReference type="NCBI Taxonomy" id="76114"/>
    <lineage>
        <taxon>Bacteria</taxon>
        <taxon>Pseudomonadati</taxon>
        <taxon>Pseudomonadota</taxon>
        <taxon>Betaproteobacteria</taxon>
        <taxon>Rhodocyclales</taxon>
        <taxon>Rhodocyclaceae</taxon>
        <taxon>Aromatoleum</taxon>
    </lineage>
</organism>